<organism>
    <name type="scientific">Rhodopseudomonas palustris (strain ATCC BAA-98 / CGA009)</name>
    <dbReference type="NCBI Taxonomy" id="258594"/>
    <lineage>
        <taxon>Bacteria</taxon>
        <taxon>Pseudomonadati</taxon>
        <taxon>Pseudomonadota</taxon>
        <taxon>Alphaproteobacteria</taxon>
        <taxon>Hyphomicrobiales</taxon>
        <taxon>Nitrobacteraceae</taxon>
        <taxon>Rhodopseudomonas</taxon>
    </lineage>
</organism>
<name>RPIA_RHOPA</name>
<evidence type="ECO:0000255" key="1">
    <source>
        <dbReference type="HAMAP-Rule" id="MF_00170"/>
    </source>
</evidence>
<protein>
    <recommendedName>
        <fullName evidence="1">Ribose-5-phosphate isomerase A</fullName>
        <ecNumber evidence="1">5.3.1.6</ecNumber>
    </recommendedName>
    <alternativeName>
        <fullName evidence="1">Phosphoriboisomerase A</fullName>
        <shortName evidence="1">PRI</shortName>
    </alternativeName>
</protein>
<feature type="chain" id="PRO_0000158456" description="Ribose-5-phosphate isomerase A">
    <location>
        <begin position="1"/>
        <end position="232"/>
    </location>
</feature>
<feature type="active site" description="Proton acceptor" evidence="1">
    <location>
        <position position="105"/>
    </location>
</feature>
<feature type="binding site" evidence="1">
    <location>
        <begin position="28"/>
        <end position="31"/>
    </location>
    <ligand>
        <name>substrate</name>
    </ligand>
</feature>
<feature type="binding site" evidence="1">
    <location>
        <begin position="83"/>
        <end position="86"/>
    </location>
    <ligand>
        <name>substrate</name>
    </ligand>
</feature>
<feature type="binding site" evidence="1">
    <location>
        <begin position="96"/>
        <end position="99"/>
    </location>
    <ligand>
        <name>substrate</name>
    </ligand>
</feature>
<feature type="binding site" evidence="1">
    <location>
        <position position="123"/>
    </location>
    <ligand>
        <name>substrate</name>
    </ligand>
</feature>
<comment type="function">
    <text evidence="1">Catalyzes the reversible conversion of ribose-5-phosphate to ribulose 5-phosphate.</text>
</comment>
<comment type="catalytic activity">
    <reaction evidence="1">
        <text>aldehydo-D-ribose 5-phosphate = D-ribulose 5-phosphate</text>
        <dbReference type="Rhea" id="RHEA:14657"/>
        <dbReference type="ChEBI" id="CHEBI:58121"/>
        <dbReference type="ChEBI" id="CHEBI:58273"/>
        <dbReference type="EC" id="5.3.1.6"/>
    </reaction>
</comment>
<comment type="pathway">
    <text evidence="1">Carbohydrate degradation; pentose phosphate pathway; D-ribose 5-phosphate from D-ribulose 5-phosphate (non-oxidative stage): step 1/1.</text>
</comment>
<comment type="subunit">
    <text evidence="1">Homodimer.</text>
</comment>
<comment type="similarity">
    <text evidence="1">Belongs to the ribose 5-phosphate isomerase family.</text>
</comment>
<reference key="1">
    <citation type="journal article" date="2004" name="Nat. Biotechnol.">
        <title>Complete genome sequence of the metabolically versatile photosynthetic bacterium Rhodopseudomonas palustris.</title>
        <authorList>
            <person name="Larimer F.W."/>
            <person name="Chain P."/>
            <person name="Hauser L."/>
            <person name="Lamerdin J.E."/>
            <person name="Malfatti S."/>
            <person name="Do L."/>
            <person name="Land M.L."/>
            <person name="Pelletier D.A."/>
            <person name="Beatty J.T."/>
            <person name="Lang A.S."/>
            <person name="Tabita F.R."/>
            <person name="Gibson J.L."/>
            <person name="Hanson T.E."/>
            <person name="Bobst C."/>
            <person name="Torres y Torres J.L."/>
            <person name="Peres C."/>
            <person name="Harrison F.H."/>
            <person name="Gibson J."/>
            <person name="Harwood C.S."/>
        </authorList>
    </citation>
    <scope>NUCLEOTIDE SEQUENCE [LARGE SCALE GENOMIC DNA]</scope>
    <source>
        <strain>ATCC BAA-98 / CGA009</strain>
    </source>
</reference>
<proteinExistence type="inferred from homology"/>
<dbReference type="EC" id="5.3.1.6" evidence="1"/>
<dbReference type="EMBL" id="BX572599">
    <property type="protein sequence ID" value="CAE27422.1"/>
    <property type="molecule type" value="Genomic_DNA"/>
</dbReference>
<dbReference type="RefSeq" id="WP_011157536.1">
    <property type="nucleotide sequence ID" value="NZ_CP116810.1"/>
</dbReference>
<dbReference type="SMR" id="Q6N8C3"/>
<dbReference type="STRING" id="258594.RPA1981"/>
<dbReference type="GeneID" id="66893025"/>
<dbReference type="eggNOG" id="COG0120">
    <property type="taxonomic scope" value="Bacteria"/>
</dbReference>
<dbReference type="HOGENOM" id="CLU_056590_1_0_5"/>
<dbReference type="PhylomeDB" id="Q6N8C3"/>
<dbReference type="UniPathway" id="UPA00115">
    <property type="reaction ID" value="UER00412"/>
</dbReference>
<dbReference type="GO" id="GO:0004751">
    <property type="term" value="F:ribose-5-phosphate isomerase activity"/>
    <property type="evidence" value="ECO:0007669"/>
    <property type="project" value="UniProtKB-UniRule"/>
</dbReference>
<dbReference type="GO" id="GO:0009052">
    <property type="term" value="P:pentose-phosphate shunt, non-oxidative branch"/>
    <property type="evidence" value="ECO:0007669"/>
    <property type="project" value="UniProtKB-UniRule"/>
</dbReference>
<dbReference type="CDD" id="cd01398">
    <property type="entry name" value="RPI_A"/>
    <property type="match status" value="1"/>
</dbReference>
<dbReference type="FunFam" id="3.40.50.1360:FF:000001">
    <property type="entry name" value="Ribose-5-phosphate isomerase A"/>
    <property type="match status" value="1"/>
</dbReference>
<dbReference type="Gene3D" id="3.30.70.260">
    <property type="match status" value="1"/>
</dbReference>
<dbReference type="Gene3D" id="3.40.50.1360">
    <property type="match status" value="1"/>
</dbReference>
<dbReference type="HAMAP" id="MF_00170">
    <property type="entry name" value="Rib_5P_isom_A"/>
    <property type="match status" value="1"/>
</dbReference>
<dbReference type="InterPro" id="IPR037171">
    <property type="entry name" value="NagB/RpiA_transferase-like"/>
</dbReference>
<dbReference type="InterPro" id="IPR050262">
    <property type="entry name" value="Ribose-5P_isomerase"/>
</dbReference>
<dbReference type="InterPro" id="IPR020672">
    <property type="entry name" value="Ribose5P_isomerase_typA_subgr"/>
</dbReference>
<dbReference type="InterPro" id="IPR004788">
    <property type="entry name" value="Ribose5P_isomerase_type_A"/>
</dbReference>
<dbReference type="NCBIfam" id="NF001924">
    <property type="entry name" value="PRK00702.1"/>
    <property type="match status" value="1"/>
</dbReference>
<dbReference type="NCBIfam" id="TIGR00021">
    <property type="entry name" value="rpiA"/>
    <property type="match status" value="1"/>
</dbReference>
<dbReference type="PANTHER" id="PTHR43748">
    <property type="entry name" value="RIBOSE-5-PHOSPHATE ISOMERASE 3, CHLOROPLASTIC-RELATED"/>
    <property type="match status" value="1"/>
</dbReference>
<dbReference type="PANTHER" id="PTHR43748:SF3">
    <property type="entry name" value="RIBOSE-5-PHOSPHATE ISOMERASE 3, CHLOROPLASTIC-RELATED"/>
    <property type="match status" value="1"/>
</dbReference>
<dbReference type="Pfam" id="PF06026">
    <property type="entry name" value="Rib_5-P_isom_A"/>
    <property type="match status" value="1"/>
</dbReference>
<dbReference type="SUPFAM" id="SSF75445">
    <property type="entry name" value="D-ribose-5-phosphate isomerase (RpiA), lid domain"/>
    <property type="match status" value="1"/>
</dbReference>
<dbReference type="SUPFAM" id="SSF100950">
    <property type="entry name" value="NagB/RpiA/CoA transferase-like"/>
    <property type="match status" value="1"/>
</dbReference>
<gene>
    <name evidence="1" type="primary">rpiA</name>
    <name type="ordered locus">RPA1981</name>
</gene>
<keyword id="KW-0413">Isomerase</keyword>
<accession>Q6N8C3</accession>
<sequence>MDKEELKRRAAARALEEVRGGMKLGLGTGSTAKHFVELLGERVRLGLEIIGVPTSEVTRADAERCGIRLTSLDEIDRLDITIDGADEVDHHLDLIKGGGGALLREKIVAAASDRMIVIADESKLVDTLGRFPLPIEVIPFGLGATRRALQNAFTAAGCDGELKLRPGKDGHAFVTDGGHWILDAQLGRIPDAPRLAQLLSVIPGVVEHGLFVGMASTVVLAGADGIRTIERA</sequence>